<feature type="chain" id="PRO_0000354342" description="Small ribosomal subunit protein uS19c">
    <location>
        <begin position="1"/>
        <end position="92"/>
    </location>
</feature>
<keyword id="KW-0150">Chloroplast</keyword>
<keyword id="KW-0934">Plastid</keyword>
<keyword id="KW-0687">Ribonucleoprotein</keyword>
<keyword id="KW-0689">Ribosomal protein</keyword>
<keyword id="KW-0694">RNA-binding</keyword>
<keyword id="KW-0699">rRNA-binding</keyword>
<protein>
    <recommendedName>
        <fullName evidence="1">Small ribosomal subunit protein uS19c</fullName>
    </recommendedName>
    <alternativeName>
        <fullName evidence="2">30S ribosomal protein S19, chloroplastic</fullName>
    </alternativeName>
</protein>
<accession>Q19VA9</accession>
<comment type="function">
    <text evidence="1">Protein S19 forms a complex with S13 that binds strongly to the 16S ribosomal RNA.</text>
</comment>
<comment type="subcellular location">
    <subcellularLocation>
        <location>Plastid</location>
        <location>Chloroplast</location>
    </subcellularLocation>
</comment>
<comment type="similarity">
    <text evidence="1">Belongs to the universal ribosomal protein uS19 family.</text>
</comment>
<evidence type="ECO:0000255" key="1">
    <source>
        <dbReference type="HAMAP-Rule" id="MF_00531"/>
    </source>
</evidence>
<evidence type="ECO:0000305" key="2"/>
<geneLocation type="chloroplast"/>
<proteinExistence type="inferred from homology"/>
<dbReference type="EMBL" id="DQ422812">
    <property type="protein sequence ID" value="ABD62249.1"/>
    <property type="molecule type" value="Genomic_DNA"/>
</dbReference>
<dbReference type="RefSeq" id="YP_001019091.1">
    <property type="nucleotide sequence ID" value="NC_008822.1"/>
</dbReference>
<dbReference type="SMR" id="Q19VA9"/>
<dbReference type="GeneID" id="4783214"/>
<dbReference type="GO" id="GO:0009507">
    <property type="term" value="C:chloroplast"/>
    <property type="evidence" value="ECO:0007669"/>
    <property type="project" value="UniProtKB-SubCell"/>
</dbReference>
<dbReference type="GO" id="GO:0005763">
    <property type="term" value="C:mitochondrial small ribosomal subunit"/>
    <property type="evidence" value="ECO:0007669"/>
    <property type="project" value="TreeGrafter"/>
</dbReference>
<dbReference type="GO" id="GO:0019843">
    <property type="term" value="F:rRNA binding"/>
    <property type="evidence" value="ECO:0007669"/>
    <property type="project" value="UniProtKB-UniRule"/>
</dbReference>
<dbReference type="GO" id="GO:0003735">
    <property type="term" value="F:structural constituent of ribosome"/>
    <property type="evidence" value="ECO:0007669"/>
    <property type="project" value="InterPro"/>
</dbReference>
<dbReference type="GO" id="GO:0000028">
    <property type="term" value="P:ribosomal small subunit assembly"/>
    <property type="evidence" value="ECO:0007669"/>
    <property type="project" value="TreeGrafter"/>
</dbReference>
<dbReference type="GO" id="GO:0006412">
    <property type="term" value="P:translation"/>
    <property type="evidence" value="ECO:0007669"/>
    <property type="project" value="UniProtKB-UniRule"/>
</dbReference>
<dbReference type="FunFam" id="3.30.860.10:FF:000001">
    <property type="entry name" value="30S ribosomal protein S19"/>
    <property type="match status" value="1"/>
</dbReference>
<dbReference type="Gene3D" id="3.30.860.10">
    <property type="entry name" value="30s Ribosomal Protein S19, Chain A"/>
    <property type="match status" value="1"/>
</dbReference>
<dbReference type="HAMAP" id="MF_00531">
    <property type="entry name" value="Ribosomal_uS19"/>
    <property type="match status" value="1"/>
</dbReference>
<dbReference type="InterPro" id="IPR002222">
    <property type="entry name" value="Ribosomal_uS19"/>
</dbReference>
<dbReference type="InterPro" id="IPR005732">
    <property type="entry name" value="Ribosomal_uS19_bac-type"/>
</dbReference>
<dbReference type="InterPro" id="IPR020934">
    <property type="entry name" value="Ribosomal_uS19_CS"/>
</dbReference>
<dbReference type="InterPro" id="IPR023575">
    <property type="entry name" value="Ribosomal_uS19_SF"/>
</dbReference>
<dbReference type="NCBIfam" id="TIGR01050">
    <property type="entry name" value="rpsS_bact"/>
    <property type="match status" value="1"/>
</dbReference>
<dbReference type="PANTHER" id="PTHR11880">
    <property type="entry name" value="RIBOSOMAL PROTEIN S19P FAMILY MEMBER"/>
    <property type="match status" value="1"/>
</dbReference>
<dbReference type="PANTHER" id="PTHR11880:SF8">
    <property type="entry name" value="SMALL RIBOSOMAL SUBUNIT PROTEIN US19M"/>
    <property type="match status" value="1"/>
</dbReference>
<dbReference type="Pfam" id="PF00203">
    <property type="entry name" value="Ribosomal_S19"/>
    <property type="match status" value="1"/>
</dbReference>
<dbReference type="PIRSF" id="PIRSF002144">
    <property type="entry name" value="Ribosomal_S19"/>
    <property type="match status" value="1"/>
</dbReference>
<dbReference type="PRINTS" id="PR00975">
    <property type="entry name" value="RIBOSOMALS19"/>
</dbReference>
<dbReference type="SUPFAM" id="SSF54570">
    <property type="entry name" value="Ribosomal protein S19"/>
    <property type="match status" value="1"/>
</dbReference>
<dbReference type="PROSITE" id="PS00323">
    <property type="entry name" value="RIBOSOMAL_S19"/>
    <property type="match status" value="1"/>
</dbReference>
<name>RR19_CHLAT</name>
<sequence length="92" mass="10571">MARSLKKGPFVADHLLKKIEYLNARREKQVITTWSRGSTIVPIMIGHTIAVYNGREHLPIFVTDQMVGHKLGEFSPTRTFRGHVKSDKKSRR</sequence>
<reference key="1">
    <citation type="journal article" date="2007" name="BMC Biol.">
        <title>A clade uniting the green algae Mesostigma viride and Chlorokybus atmophyticus represents the deepest branch of the Streptophyta in chloroplast genome-based phylogenies.</title>
        <authorList>
            <person name="Lemieux C."/>
            <person name="Otis C."/>
            <person name="Turmel M."/>
        </authorList>
    </citation>
    <scope>NUCLEOTIDE SEQUENCE [LARGE SCALE GENOMIC DNA]</scope>
    <source>
        <strain>SAG 48.80</strain>
    </source>
</reference>
<organism>
    <name type="scientific">Chlorokybus atmophyticus</name>
    <name type="common">Soil alga</name>
    <dbReference type="NCBI Taxonomy" id="3144"/>
    <lineage>
        <taxon>Eukaryota</taxon>
        <taxon>Viridiplantae</taxon>
        <taxon>Streptophyta</taxon>
        <taxon>Chlorokybophyceae</taxon>
        <taxon>Chlorokybales</taxon>
        <taxon>Chlorokybaceae</taxon>
        <taxon>Chlorokybus</taxon>
    </lineage>
</organism>
<gene>
    <name evidence="1" type="primary">rps19</name>
</gene>